<name>H4_BLAAD</name>
<evidence type="ECO:0000250" key="1"/>
<evidence type="ECO:0000250" key="2">
    <source>
        <dbReference type="UniProtKB" id="P02309"/>
    </source>
</evidence>
<evidence type="ECO:0000250" key="3">
    <source>
        <dbReference type="UniProtKB" id="P62805"/>
    </source>
</evidence>
<evidence type="ECO:0000305" key="4"/>
<feature type="initiator methionine" description="Removed" evidence="1">
    <location>
        <position position="1"/>
    </location>
</feature>
<feature type="chain" id="PRO_0000158279" description="Histone H4">
    <location>
        <begin position="2"/>
        <end position="103"/>
    </location>
</feature>
<feature type="DNA-binding region">
    <location>
        <begin position="17"/>
        <end position="21"/>
    </location>
</feature>
<feature type="modified residue" description="N6-acetyl-N6-methyllysine; alternate" evidence="3">
    <location>
        <position position="6"/>
    </location>
</feature>
<feature type="modified residue" description="N6-methyllysine; alternate" evidence="2">
    <location>
        <position position="6"/>
    </location>
</feature>
<feature type="modified residue" description="N6-methyllysine; alternate" evidence="2">
    <location>
        <position position="9"/>
    </location>
</feature>
<feature type="modified residue" description="N6-acetyl-N6-methyllysine; alternate" evidence="3">
    <location>
        <position position="13"/>
    </location>
</feature>
<feature type="modified residue" description="N6-methyllysine; alternate" evidence="2">
    <location>
        <position position="13"/>
    </location>
</feature>
<feature type="modified residue" description="N6-glutaryllysine" evidence="2">
    <location>
        <position position="92"/>
    </location>
</feature>
<keyword id="KW-0007">Acetylation</keyword>
<keyword id="KW-0158">Chromosome</keyword>
<keyword id="KW-0238">DNA-binding</keyword>
<keyword id="KW-0488">Methylation</keyword>
<keyword id="KW-0544">Nucleosome core</keyword>
<keyword id="KW-0539">Nucleus</keyword>
<organism>
    <name type="scientific">Blastobotrys adeninivorans</name>
    <name type="common">Yeast</name>
    <name type="synonym">Arxula adeninivorans</name>
    <dbReference type="NCBI Taxonomy" id="409370"/>
    <lineage>
        <taxon>Eukaryota</taxon>
        <taxon>Fungi</taxon>
        <taxon>Dikarya</taxon>
        <taxon>Ascomycota</taxon>
        <taxon>Saccharomycotina</taxon>
        <taxon>Dipodascomycetes</taxon>
        <taxon>Dipodascales</taxon>
        <taxon>Trichomonascaceae</taxon>
        <taxon>Blastobotrys</taxon>
    </lineage>
</organism>
<accession>Q8J1L3</accession>
<reference key="1">
    <citation type="submission" date="2002-12" db="EMBL/GenBank/DDBJ databases">
        <title>The constitutive AHSB4-promoter - a novel component of the Arxula adeninivorans-based expression platform.</title>
        <authorList>
            <person name="Wartmann T."/>
            <person name="Bellebna C."/>
            <person name="Boeer E."/>
            <person name="Gellissen G."/>
            <person name="Kunze G."/>
        </authorList>
    </citation>
    <scope>NUCLEOTIDE SEQUENCE [GENOMIC DNA]</scope>
    <source>
        <strain>LS3</strain>
    </source>
</reference>
<sequence length="103" mass="11398">MSGRGKGGKGLGKGGAKRHRKILRDNIQGITKPAIRRLARRGGVKRISALIYEETRSVLKTFLESVIRDAVTYTEHAKRKTVTSLDVVYALKRQGRTLYGFGG</sequence>
<gene>
    <name type="primary">ahsb4</name>
</gene>
<comment type="function">
    <text>Core component of nucleosome. Nucleosomes wrap and compact DNA into chromatin, limiting DNA accessibility to the cellular machineries which require DNA as a template. Histones thereby play a central role in transcription regulation, DNA repair, DNA replication and chromosomal stability. DNA accessibility is regulated via a complex set of post-translational modifications of histones, also called histone code, and nucleosome remodeling.</text>
</comment>
<comment type="subunit">
    <text>The nucleosome is a histone octamer containing two molecules each of H2A, H2B, H3 and H4 assembled in one H3-H4 heterotetramer and two H2A-H2B heterodimers. The octamer wraps approximately 147 bp of DNA.</text>
</comment>
<comment type="subcellular location">
    <subcellularLocation>
        <location evidence="1">Nucleus</location>
    </subcellularLocation>
    <subcellularLocation>
        <location evidence="1">Chromosome</location>
    </subcellularLocation>
</comment>
<comment type="PTM">
    <text evidence="2">Glutarylation at Lys-92 (H4K91glu) destabilizes nucleosomes by promoting dissociation of the H2A-H2B dimers from nucleosomes.</text>
</comment>
<comment type="similarity">
    <text evidence="4">Belongs to the histone H4 family.</text>
</comment>
<dbReference type="EMBL" id="AJ535732">
    <property type="protein sequence ID" value="CAD59972.1"/>
    <property type="molecule type" value="Genomic_DNA"/>
</dbReference>
<dbReference type="SMR" id="Q8J1L3"/>
<dbReference type="PhylomeDB" id="Q8J1L3"/>
<dbReference type="GO" id="GO:0000786">
    <property type="term" value="C:nucleosome"/>
    <property type="evidence" value="ECO:0007669"/>
    <property type="project" value="UniProtKB-KW"/>
</dbReference>
<dbReference type="GO" id="GO:0005634">
    <property type="term" value="C:nucleus"/>
    <property type="evidence" value="ECO:0007669"/>
    <property type="project" value="UniProtKB-SubCell"/>
</dbReference>
<dbReference type="GO" id="GO:0003677">
    <property type="term" value="F:DNA binding"/>
    <property type="evidence" value="ECO:0007669"/>
    <property type="project" value="UniProtKB-KW"/>
</dbReference>
<dbReference type="GO" id="GO:0046982">
    <property type="term" value="F:protein heterodimerization activity"/>
    <property type="evidence" value="ECO:0007669"/>
    <property type="project" value="InterPro"/>
</dbReference>
<dbReference type="GO" id="GO:0030527">
    <property type="term" value="F:structural constituent of chromatin"/>
    <property type="evidence" value="ECO:0007669"/>
    <property type="project" value="InterPro"/>
</dbReference>
<dbReference type="CDD" id="cd22912">
    <property type="entry name" value="HFD_H4"/>
    <property type="match status" value="1"/>
</dbReference>
<dbReference type="FunFam" id="1.10.20.10:FF:000007">
    <property type="entry name" value="Histone H4"/>
    <property type="match status" value="1"/>
</dbReference>
<dbReference type="Gene3D" id="1.10.20.10">
    <property type="entry name" value="Histone, subunit A"/>
    <property type="match status" value="1"/>
</dbReference>
<dbReference type="InterPro" id="IPR035425">
    <property type="entry name" value="CENP-T/H4_C"/>
</dbReference>
<dbReference type="InterPro" id="IPR009072">
    <property type="entry name" value="Histone-fold"/>
</dbReference>
<dbReference type="InterPro" id="IPR001951">
    <property type="entry name" value="Histone_H4"/>
</dbReference>
<dbReference type="InterPro" id="IPR019809">
    <property type="entry name" value="Histone_H4_CS"/>
</dbReference>
<dbReference type="InterPro" id="IPR004823">
    <property type="entry name" value="TAF_TATA-bd_Histone-like_dom"/>
</dbReference>
<dbReference type="PANTHER" id="PTHR10484">
    <property type="entry name" value="HISTONE H4"/>
    <property type="match status" value="1"/>
</dbReference>
<dbReference type="Pfam" id="PF15511">
    <property type="entry name" value="CENP-T_C"/>
    <property type="match status" value="1"/>
</dbReference>
<dbReference type="PRINTS" id="PR00623">
    <property type="entry name" value="HISTONEH4"/>
</dbReference>
<dbReference type="SMART" id="SM00417">
    <property type="entry name" value="H4"/>
    <property type="match status" value="1"/>
</dbReference>
<dbReference type="SMART" id="SM00803">
    <property type="entry name" value="TAF"/>
    <property type="match status" value="1"/>
</dbReference>
<dbReference type="SUPFAM" id="SSF47113">
    <property type="entry name" value="Histone-fold"/>
    <property type="match status" value="1"/>
</dbReference>
<dbReference type="PROSITE" id="PS00047">
    <property type="entry name" value="HISTONE_H4"/>
    <property type="match status" value="1"/>
</dbReference>
<proteinExistence type="inferred from homology"/>
<protein>
    <recommendedName>
        <fullName>Histone H4</fullName>
    </recommendedName>
</protein>